<name>LPXD_METEP</name>
<keyword id="KW-0012">Acyltransferase</keyword>
<keyword id="KW-0441">Lipid A biosynthesis</keyword>
<keyword id="KW-0444">Lipid biosynthesis</keyword>
<keyword id="KW-0443">Lipid metabolism</keyword>
<keyword id="KW-0677">Repeat</keyword>
<keyword id="KW-0808">Transferase</keyword>
<reference key="1">
    <citation type="submission" date="2007-12" db="EMBL/GenBank/DDBJ databases">
        <title>Complete sequence of Methylobacterium extorquens PA1.</title>
        <authorList>
            <consortium name="US DOE Joint Genome Institute"/>
            <person name="Copeland A."/>
            <person name="Lucas S."/>
            <person name="Lapidus A."/>
            <person name="Barry K."/>
            <person name="Glavina del Rio T."/>
            <person name="Dalin E."/>
            <person name="Tice H."/>
            <person name="Pitluck S."/>
            <person name="Saunders E."/>
            <person name="Brettin T."/>
            <person name="Bruce D."/>
            <person name="Detter J.C."/>
            <person name="Han C."/>
            <person name="Schmutz J."/>
            <person name="Larimer F."/>
            <person name="Land M."/>
            <person name="Hauser L."/>
            <person name="Kyrpides N."/>
            <person name="Kim E."/>
            <person name="Marx C."/>
            <person name="Richardson P."/>
        </authorList>
    </citation>
    <scope>NUCLEOTIDE SEQUENCE [LARGE SCALE GENOMIC DNA]</scope>
    <source>
        <strain>PA1</strain>
    </source>
</reference>
<evidence type="ECO:0000255" key="1">
    <source>
        <dbReference type="HAMAP-Rule" id="MF_00523"/>
    </source>
</evidence>
<comment type="function">
    <text evidence="1">Catalyzes the N-acylation of UDP-3-O-acylglucosamine using 3-hydroxyacyl-ACP as the acyl donor. Is involved in the biosynthesis of lipid A, a phosphorylated glycolipid that anchors the lipopolysaccharide to the outer membrane of the cell.</text>
</comment>
<comment type="catalytic activity">
    <reaction evidence="1">
        <text>a UDP-3-O-[(3R)-3-hydroxyacyl]-alpha-D-glucosamine + a (3R)-hydroxyacyl-[ACP] = a UDP-2-N,3-O-bis[(3R)-3-hydroxyacyl]-alpha-D-glucosamine + holo-[ACP] + H(+)</text>
        <dbReference type="Rhea" id="RHEA:53836"/>
        <dbReference type="Rhea" id="RHEA-COMP:9685"/>
        <dbReference type="Rhea" id="RHEA-COMP:9945"/>
        <dbReference type="ChEBI" id="CHEBI:15378"/>
        <dbReference type="ChEBI" id="CHEBI:64479"/>
        <dbReference type="ChEBI" id="CHEBI:78827"/>
        <dbReference type="ChEBI" id="CHEBI:137740"/>
        <dbReference type="ChEBI" id="CHEBI:137748"/>
        <dbReference type="EC" id="2.3.1.191"/>
    </reaction>
</comment>
<comment type="pathway">
    <text evidence="1">Bacterial outer membrane biogenesis; LPS lipid A biosynthesis.</text>
</comment>
<comment type="subunit">
    <text evidence="1">Homotrimer.</text>
</comment>
<comment type="similarity">
    <text evidence="1">Belongs to the transferase hexapeptide repeat family. LpxD subfamily.</text>
</comment>
<accession>A9W4H0</accession>
<feature type="chain" id="PRO_1000127683" description="UDP-3-O-acylglucosamine N-acyltransferase">
    <location>
        <begin position="1"/>
        <end position="351"/>
    </location>
</feature>
<feature type="active site" description="Proton acceptor" evidence="1">
    <location>
        <position position="257"/>
    </location>
</feature>
<proteinExistence type="inferred from homology"/>
<dbReference type="EC" id="2.3.1.191" evidence="1"/>
<dbReference type="EMBL" id="CP000908">
    <property type="protein sequence ID" value="ABY30476.1"/>
    <property type="molecule type" value="Genomic_DNA"/>
</dbReference>
<dbReference type="RefSeq" id="WP_012253583.1">
    <property type="nucleotide sequence ID" value="NC_010172.1"/>
</dbReference>
<dbReference type="SMR" id="A9W4H0"/>
<dbReference type="KEGG" id="mex:Mext_2080"/>
<dbReference type="eggNOG" id="COG1044">
    <property type="taxonomic scope" value="Bacteria"/>
</dbReference>
<dbReference type="HOGENOM" id="CLU_049865_0_2_5"/>
<dbReference type="BioCyc" id="MEXT419610:MEXT_RS10500-MONOMER"/>
<dbReference type="UniPathway" id="UPA00973"/>
<dbReference type="GO" id="GO:0016020">
    <property type="term" value="C:membrane"/>
    <property type="evidence" value="ECO:0007669"/>
    <property type="project" value="GOC"/>
</dbReference>
<dbReference type="GO" id="GO:0016410">
    <property type="term" value="F:N-acyltransferase activity"/>
    <property type="evidence" value="ECO:0007669"/>
    <property type="project" value="InterPro"/>
</dbReference>
<dbReference type="GO" id="GO:0009245">
    <property type="term" value="P:lipid A biosynthetic process"/>
    <property type="evidence" value="ECO:0007669"/>
    <property type="project" value="UniProtKB-UniRule"/>
</dbReference>
<dbReference type="CDD" id="cd03352">
    <property type="entry name" value="LbH_LpxD"/>
    <property type="match status" value="1"/>
</dbReference>
<dbReference type="Gene3D" id="2.160.10.10">
    <property type="entry name" value="Hexapeptide repeat proteins"/>
    <property type="match status" value="1"/>
</dbReference>
<dbReference type="Gene3D" id="3.40.1390.10">
    <property type="entry name" value="MurE/MurF, N-terminal domain"/>
    <property type="match status" value="1"/>
</dbReference>
<dbReference type="HAMAP" id="MF_00523">
    <property type="entry name" value="LpxD"/>
    <property type="match status" value="1"/>
</dbReference>
<dbReference type="InterPro" id="IPR001451">
    <property type="entry name" value="Hexapep"/>
</dbReference>
<dbReference type="InterPro" id="IPR018357">
    <property type="entry name" value="Hexapep_transf_CS"/>
</dbReference>
<dbReference type="InterPro" id="IPR007691">
    <property type="entry name" value="LpxD"/>
</dbReference>
<dbReference type="InterPro" id="IPR011004">
    <property type="entry name" value="Trimer_LpxA-like_sf"/>
</dbReference>
<dbReference type="InterPro" id="IPR020573">
    <property type="entry name" value="UDP_GlcNAc_AcTrfase_non-rep"/>
</dbReference>
<dbReference type="NCBIfam" id="TIGR01853">
    <property type="entry name" value="lipid_A_lpxD"/>
    <property type="match status" value="1"/>
</dbReference>
<dbReference type="NCBIfam" id="NF002060">
    <property type="entry name" value="PRK00892.1"/>
    <property type="match status" value="1"/>
</dbReference>
<dbReference type="PANTHER" id="PTHR43378">
    <property type="entry name" value="UDP-3-O-ACYLGLUCOSAMINE N-ACYLTRANSFERASE"/>
    <property type="match status" value="1"/>
</dbReference>
<dbReference type="PANTHER" id="PTHR43378:SF2">
    <property type="entry name" value="UDP-3-O-ACYLGLUCOSAMINE N-ACYLTRANSFERASE 1, MITOCHONDRIAL-RELATED"/>
    <property type="match status" value="1"/>
</dbReference>
<dbReference type="Pfam" id="PF00132">
    <property type="entry name" value="Hexapep"/>
    <property type="match status" value="2"/>
</dbReference>
<dbReference type="Pfam" id="PF04613">
    <property type="entry name" value="LpxD"/>
    <property type="match status" value="1"/>
</dbReference>
<dbReference type="SUPFAM" id="SSF51161">
    <property type="entry name" value="Trimeric LpxA-like enzymes"/>
    <property type="match status" value="1"/>
</dbReference>
<dbReference type="PROSITE" id="PS00101">
    <property type="entry name" value="HEXAPEP_TRANSFERASES"/>
    <property type="match status" value="2"/>
</dbReference>
<protein>
    <recommendedName>
        <fullName evidence="1">UDP-3-O-acylglucosamine N-acyltransferase</fullName>
        <ecNumber evidence="1">2.3.1.191</ecNumber>
    </recommendedName>
</protein>
<organism>
    <name type="scientific">Methylorubrum extorquens (strain PA1)</name>
    <name type="common">Methylobacterium extorquens</name>
    <dbReference type="NCBI Taxonomy" id="419610"/>
    <lineage>
        <taxon>Bacteria</taxon>
        <taxon>Pseudomonadati</taxon>
        <taxon>Pseudomonadota</taxon>
        <taxon>Alphaproteobacteria</taxon>
        <taxon>Hyphomicrobiales</taxon>
        <taxon>Methylobacteriaceae</taxon>
        <taxon>Methylorubrum</taxon>
    </lineage>
</organism>
<gene>
    <name evidence="1" type="primary">lpxD</name>
    <name type="ordered locus">Mext_2080</name>
</gene>
<sequence>MSDPVFIAPKGGLTLGSVAEACGVPLPDGADPAQPVTGAAPLETAGPSELAYMDNARYGDALATTRALACLVSPRFAPRVPAGTIALVTRDPYRAYAGLLARLYEEAMRPGSLFAAAGVSPGAHVHPQARLEDGMRIDPGAVVGPGAEIGSGTVLGPNAVIGPNVRIGRDCSIGAGATLTHALVGNRVIVHPGARIGQDGFGFAMGAGGHIKVPQVGRVIIQDDVEIGANTTIDRGASRDTVVGEGTKIDNLVQIAHNVVIGRHCVIVSGVGISGSTTLEDYVVLGGQVGVVGHLRIGMGSQIAGSSNVNRDVPPGSRWGGTPAKPVRTWFREMTTLARLAERGGKDEAEG</sequence>